<organism>
    <name type="scientific">Salmonella typhimurium (strain LT2 / SGSC1412 / ATCC 700720)</name>
    <dbReference type="NCBI Taxonomy" id="99287"/>
    <lineage>
        <taxon>Bacteria</taxon>
        <taxon>Pseudomonadati</taxon>
        <taxon>Pseudomonadota</taxon>
        <taxon>Gammaproteobacteria</taxon>
        <taxon>Enterobacterales</taxon>
        <taxon>Enterobacteriaceae</taxon>
        <taxon>Salmonella</taxon>
    </lineage>
</organism>
<reference key="1">
    <citation type="journal article" date="1998" name="Proc. Natl. Acad. Sci. U.S.A.">
        <title>Virulence of antibiotic-resistant Salmonella typhimurium.</title>
        <authorList>
            <person name="Bjoerkman J."/>
            <person name="Hughes D."/>
            <person name="Andersson D.I."/>
        </authorList>
    </citation>
    <scope>NUCLEOTIDE SEQUENCE [GENOMIC DNA]</scope>
    <scope>VARIANTS</scope>
    <source>
        <strain>LT2</strain>
    </source>
</reference>
<reference key="2">
    <citation type="journal article" date="2001" name="Nature">
        <title>Complete genome sequence of Salmonella enterica serovar Typhimurium LT2.</title>
        <authorList>
            <person name="McClelland M."/>
            <person name="Sanderson K.E."/>
            <person name="Spieth J."/>
            <person name="Clifton S.W."/>
            <person name="Latreille P."/>
            <person name="Courtney L."/>
            <person name="Porwollik S."/>
            <person name="Ali J."/>
            <person name="Dante M."/>
            <person name="Du F."/>
            <person name="Hou S."/>
            <person name="Layman D."/>
            <person name="Leonard S."/>
            <person name="Nguyen C."/>
            <person name="Scott K."/>
            <person name="Holmes A."/>
            <person name="Grewal N."/>
            <person name="Mulvaney E."/>
            <person name="Ryan E."/>
            <person name="Sun H."/>
            <person name="Florea L."/>
            <person name="Miller W."/>
            <person name="Stoneking T."/>
            <person name="Nhan M."/>
            <person name="Waterston R."/>
            <person name="Wilson R.K."/>
        </authorList>
    </citation>
    <scope>NUCLEOTIDE SEQUENCE [LARGE SCALE GENOMIC DNA]</scope>
    <source>
        <strain>LT2 / SGSC1412 / ATCC 700720</strain>
    </source>
</reference>
<reference key="3">
    <citation type="journal article" date="1999" name="Mol. Microbiol.">
        <title>Novel ribosomal mutations affecting translational accuracy, antibiotic resistance and virulence of Salmonella typhimurium.</title>
        <authorList>
            <person name="Bjoerkman J."/>
            <person name="Samuelsson P."/>
            <person name="Andersson D.I."/>
            <person name="Hughes D."/>
        </authorList>
    </citation>
    <scope>CHARACTERIZATION OF VARIANTS</scope>
    <source>
        <strain>LT2</strain>
    </source>
</reference>
<reference key="4">
    <citation type="book" date="1996" name="Escherichia coli and Salmonella: Cellular and molecular biology (2nd ed.)">
        <title>Limitations of translational accuracy.</title>
        <editorList>
            <person name="Neidhardt F.C."/>
            <person name="Curtiss R. III"/>
            <person name="Ingraham J.L."/>
            <person name="Lin E.C.C."/>
            <person name="Low K.B. Magasanik B."/>
            <person name="Reznikoff W.S."/>
            <person name="Riley M."/>
            <person name="Schaechter M."/>
            <person name="Umbarger H.E."/>
        </editorList>
        <authorList>
            <person name="Kurland C.G."/>
            <person name="Hughes D."/>
            <person name="Ehrenberg M."/>
        </authorList>
    </citation>
    <scope>REVIEW ON TRANSLATIONAL ACCURACY</scope>
</reference>
<protein>
    <recommendedName>
        <fullName evidence="2">Small ribosomal subunit protein uS4</fullName>
    </recommendedName>
    <alternativeName>
        <fullName>30S ribosomal protein S4</fullName>
    </alternativeName>
</protein>
<dbReference type="EMBL" id="AJ223236">
    <property type="protein sequence ID" value="CAA11203.1"/>
    <property type="molecule type" value="Genomic_DNA"/>
</dbReference>
<dbReference type="EMBL" id="AE006468">
    <property type="protein sequence ID" value="AAL22279.1"/>
    <property type="molecule type" value="Genomic_DNA"/>
</dbReference>
<dbReference type="RefSeq" id="NP_462320.1">
    <property type="nucleotide sequence ID" value="NC_003197.2"/>
</dbReference>
<dbReference type="RefSeq" id="WP_000135226.1">
    <property type="nucleotide sequence ID" value="NC_003197.2"/>
</dbReference>
<dbReference type="SMR" id="O54297"/>
<dbReference type="STRING" id="99287.STM3416"/>
<dbReference type="PaxDb" id="99287-STM3416"/>
<dbReference type="GeneID" id="1254939"/>
<dbReference type="GeneID" id="93035755"/>
<dbReference type="KEGG" id="stm:STM3416"/>
<dbReference type="PATRIC" id="fig|99287.12.peg.3613"/>
<dbReference type="HOGENOM" id="CLU_092403_0_2_6"/>
<dbReference type="OMA" id="QLVVELY"/>
<dbReference type="PhylomeDB" id="O54297"/>
<dbReference type="BioCyc" id="SENT99287:STM3416-MONOMER"/>
<dbReference type="Proteomes" id="UP000001014">
    <property type="component" value="Chromosome"/>
</dbReference>
<dbReference type="GO" id="GO:0015935">
    <property type="term" value="C:small ribosomal subunit"/>
    <property type="evidence" value="ECO:0000318"/>
    <property type="project" value="GO_Central"/>
</dbReference>
<dbReference type="GO" id="GO:0019843">
    <property type="term" value="F:rRNA binding"/>
    <property type="evidence" value="ECO:0000318"/>
    <property type="project" value="GO_Central"/>
</dbReference>
<dbReference type="GO" id="GO:0003735">
    <property type="term" value="F:structural constituent of ribosome"/>
    <property type="evidence" value="ECO:0000318"/>
    <property type="project" value="GO_Central"/>
</dbReference>
<dbReference type="GO" id="GO:0046677">
    <property type="term" value="P:response to antibiotic"/>
    <property type="evidence" value="ECO:0007669"/>
    <property type="project" value="UniProtKB-KW"/>
</dbReference>
<dbReference type="GO" id="GO:0042274">
    <property type="term" value="P:ribosomal small subunit biogenesis"/>
    <property type="evidence" value="ECO:0000318"/>
    <property type="project" value="GO_Central"/>
</dbReference>
<dbReference type="GO" id="GO:0006412">
    <property type="term" value="P:translation"/>
    <property type="evidence" value="ECO:0007669"/>
    <property type="project" value="UniProtKB-UniRule"/>
</dbReference>
<dbReference type="CDD" id="cd00165">
    <property type="entry name" value="S4"/>
    <property type="match status" value="1"/>
</dbReference>
<dbReference type="FunFam" id="1.10.1050.10:FF:000001">
    <property type="entry name" value="30S ribosomal protein S4"/>
    <property type="match status" value="1"/>
</dbReference>
<dbReference type="FunFam" id="3.10.290.10:FF:000001">
    <property type="entry name" value="30S ribosomal protein S4"/>
    <property type="match status" value="1"/>
</dbReference>
<dbReference type="Gene3D" id="1.10.1050.10">
    <property type="entry name" value="Ribosomal Protein S4 Delta 41, Chain A, domain 1"/>
    <property type="match status" value="1"/>
</dbReference>
<dbReference type="Gene3D" id="3.10.290.10">
    <property type="entry name" value="RNA-binding S4 domain"/>
    <property type="match status" value="1"/>
</dbReference>
<dbReference type="HAMAP" id="MF_01306_B">
    <property type="entry name" value="Ribosomal_uS4_B"/>
    <property type="match status" value="1"/>
</dbReference>
<dbReference type="InterPro" id="IPR022801">
    <property type="entry name" value="Ribosomal_uS4"/>
</dbReference>
<dbReference type="InterPro" id="IPR005709">
    <property type="entry name" value="Ribosomal_uS4_bac-type"/>
</dbReference>
<dbReference type="InterPro" id="IPR018079">
    <property type="entry name" value="Ribosomal_uS4_CS"/>
</dbReference>
<dbReference type="InterPro" id="IPR001912">
    <property type="entry name" value="Ribosomal_uS4_N"/>
</dbReference>
<dbReference type="InterPro" id="IPR002942">
    <property type="entry name" value="S4_RNA-bd"/>
</dbReference>
<dbReference type="InterPro" id="IPR036986">
    <property type="entry name" value="S4_RNA-bd_sf"/>
</dbReference>
<dbReference type="NCBIfam" id="NF003717">
    <property type="entry name" value="PRK05327.1"/>
    <property type="match status" value="1"/>
</dbReference>
<dbReference type="NCBIfam" id="TIGR01017">
    <property type="entry name" value="rpsD_bact"/>
    <property type="match status" value="1"/>
</dbReference>
<dbReference type="PANTHER" id="PTHR11831">
    <property type="entry name" value="30S 40S RIBOSOMAL PROTEIN"/>
    <property type="match status" value="1"/>
</dbReference>
<dbReference type="PANTHER" id="PTHR11831:SF4">
    <property type="entry name" value="SMALL RIBOSOMAL SUBUNIT PROTEIN US4M"/>
    <property type="match status" value="1"/>
</dbReference>
<dbReference type="Pfam" id="PF00163">
    <property type="entry name" value="Ribosomal_S4"/>
    <property type="match status" value="1"/>
</dbReference>
<dbReference type="Pfam" id="PF01479">
    <property type="entry name" value="S4"/>
    <property type="match status" value="1"/>
</dbReference>
<dbReference type="SMART" id="SM01390">
    <property type="entry name" value="Ribosomal_S4"/>
    <property type="match status" value="1"/>
</dbReference>
<dbReference type="SMART" id="SM00363">
    <property type="entry name" value="S4"/>
    <property type="match status" value="1"/>
</dbReference>
<dbReference type="SUPFAM" id="SSF55174">
    <property type="entry name" value="Alpha-L RNA-binding motif"/>
    <property type="match status" value="1"/>
</dbReference>
<dbReference type="PROSITE" id="PS00632">
    <property type="entry name" value="RIBOSOMAL_S4"/>
    <property type="match status" value="1"/>
</dbReference>
<dbReference type="PROSITE" id="PS50889">
    <property type="entry name" value="S4"/>
    <property type="match status" value="1"/>
</dbReference>
<sequence length="206" mass="23485">MARYLGPKLKLSRREGTDLFLKSGVRAIDTKCKIEQAPGQHGARKPRLSDYGVQLREKQKVRRIYGVLERQFRNYYKEAARLKGNTGENLLALLEGRLDNVVYRMGFGATRAEARQLVSHKAIMVNGRVVNIASYQVSPNDVVSIREKAKKQSRVKAALELAEQREKPTWLEVDAGKMEGTYKRKPERSDLSADINEHLIVELYSK</sequence>
<comment type="function">
    <text evidence="1">One of the primary rRNA binding proteins, it binds directly to 16S rRNA where it nucleates assembly of the body of the 30S subunit.</text>
</comment>
<comment type="function">
    <text>With S5 and S12 plays an important role in translational accuracy.</text>
</comment>
<comment type="subunit">
    <text>Part of the 30S ribosomal subunit. Contacts protein S5. The interaction surface between S4 and S5 is involved in control of translational fidelity.</text>
</comment>
<comment type="similarity">
    <text evidence="2">Belongs to the universal ribosomal protein uS4 family.</text>
</comment>
<accession>O54297</accession>
<feature type="initiator methionine" description="Removed" evidence="1">
    <location>
        <position position="1"/>
    </location>
</feature>
<feature type="chain" id="PRO_0000132451" description="Small ribosomal subunit protein uS4">
    <location>
        <begin position="2"/>
        <end position="206"/>
    </location>
</feature>
<feature type="domain" description="S4 RNA-binding">
    <location>
        <begin position="96"/>
        <end position="156"/>
    </location>
</feature>
<feature type="sequence variant" description="Streptomycin resistant. Also confers streptomycin independence on streptomycin-dependent S12 mutant P91D.">
    <original>Q</original>
    <variation>L</variation>
    <location>
        <position position="54"/>
    </location>
</feature>
<feature type="sequence variant" description="Confers streptomycin independence on streptomycin-dependent S12 mutant P90R. A RAM mutant.">
    <original>Q</original>
    <variation>P</variation>
    <location>
        <position position="54"/>
    </location>
</feature>
<feature type="sequence variant" description="Confers streptomycin independence on streptomycin-dependent S12 mutant P91D. A RAM mutant.">
    <original>I</original>
    <variation>N</variation>
    <location>
        <position position="200"/>
    </location>
</feature>
<feature type="sequence variant" description="Streptomycin resistant. Also confers streptomycin independence on streptomycin-dependent S12 mutant P91D.">
    <location>
        <position position="201"/>
    </location>
</feature>
<feature type="sequence variant" description="Streptomycin resistant. Also confers streptomycin independence on streptomycin-dependent S12 mutant P90L.">
    <location>
        <begin position="202"/>
        <end position="206"/>
    </location>
</feature>
<feature type="sequence variant" description="In JB221; fast-growing suppressor of streptomycin resistant mutant S12 K42N. A RAM mutant.">
    <original>K</original>
    <variation>N</variation>
    <location>
        <position position="206"/>
    </location>
</feature>
<feature type="sequence variant" description="Confers streptomycin independence on streptomycin-dependent S12 mutant P90R. A RAM mutant.">
    <original>K</original>
    <variation>T</variation>
    <location>
        <position position="206"/>
    </location>
</feature>
<gene>
    <name type="primary">rpsD</name>
    <name type="ordered locus">STM3416</name>
</gene>
<proteinExistence type="evidence at protein level"/>
<keyword id="KW-0046">Antibiotic resistance</keyword>
<keyword id="KW-1185">Reference proteome</keyword>
<keyword id="KW-0687">Ribonucleoprotein</keyword>
<keyword id="KW-0689">Ribosomal protein</keyword>
<keyword id="KW-0694">RNA-binding</keyword>
<keyword id="KW-0699">rRNA-binding</keyword>
<evidence type="ECO:0000250" key="1"/>
<evidence type="ECO:0000305" key="2"/>
<name>RS4_SALTY</name>